<gene>
    <name type="primary">AAD4</name>
    <name type="ordered locus">YDL243C</name>
</gene>
<keyword id="KW-0521">NADP</keyword>
<keyword id="KW-0560">Oxidoreductase</keyword>
<keyword id="KW-1185">Reference proteome</keyword>
<keyword id="KW-0346">Stress response</keyword>
<dbReference type="EC" id="1.1.1.-"/>
<dbReference type="EMBL" id="Z74291">
    <property type="protein sequence ID" value="CAA98823.1"/>
    <property type="molecule type" value="Genomic_DNA"/>
</dbReference>
<dbReference type="EMBL" id="BK006938">
    <property type="protein sequence ID" value="DAA11624.1"/>
    <property type="molecule type" value="Genomic_DNA"/>
</dbReference>
<dbReference type="PIR" id="S67807">
    <property type="entry name" value="S67807"/>
</dbReference>
<dbReference type="RefSeq" id="NP_010038.1">
    <property type="nucleotide sequence ID" value="NM_001180303.1"/>
</dbReference>
<dbReference type="SMR" id="Q07747"/>
<dbReference type="BioGRID" id="31869">
    <property type="interactions" value="132"/>
</dbReference>
<dbReference type="DIP" id="DIP-5172N"/>
<dbReference type="FunCoup" id="Q07747">
    <property type="interactions" value="70"/>
</dbReference>
<dbReference type="IntAct" id="Q07747">
    <property type="interactions" value="2"/>
</dbReference>
<dbReference type="STRING" id="4932.YDL243C"/>
<dbReference type="PaxDb" id="4932-YDL243C"/>
<dbReference type="PeptideAtlas" id="Q07747"/>
<dbReference type="EnsemblFungi" id="YDL243C_mRNA">
    <property type="protein sequence ID" value="YDL243C"/>
    <property type="gene ID" value="YDL243C"/>
</dbReference>
<dbReference type="GeneID" id="851354"/>
<dbReference type="KEGG" id="sce:YDL243C"/>
<dbReference type="AGR" id="SGD:S000002402"/>
<dbReference type="SGD" id="S000002402">
    <property type="gene designation" value="AAD4"/>
</dbReference>
<dbReference type="VEuPathDB" id="FungiDB:YDL243C"/>
<dbReference type="eggNOG" id="KOG1575">
    <property type="taxonomic scope" value="Eukaryota"/>
</dbReference>
<dbReference type="GeneTree" id="ENSGT00940000176306"/>
<dbReference type="HOGENOM" id="CLU_023205_2_2_1"/>
<dbReference type="InParanoid" id="Q07747"/>
<dbReference type="OMA" id="NEESEAW"/>
<dbReference type="OrthoDB" id="48988at2759"/>
<dbReference type="BioCyc" id="YEAST:YDL243C-MONOMER"/>
<dbReference type="BioGRID-ORCS" id="851354">
    <property type="hits" value="1 hit in 10 CRISPR screens"/>
</dbReference>
<dbReference type="PRO" id="PR:Q07747"/>
<dbReference type="Proteomes" id="UP000002311">
    <property type="component" value="Chromosome IV"/>
</dbReference>
<dbReference type="RNAct" id="Q07747">
    <property type="molecule type" value="protein"/>
</dbReference>
<dbReference type="GO" id="GO:0047681">
    <property type="term" value="F:aryl-alcohol dehydrogenase (NADP+) activity"/>
    <property type="evidence" value="ECO:0000314"/>
    <property type="project" value="SGD"/>
</dbReference>
<dbReference type="GO" id="GO:0006081">
    <property type="term" value="P:aldehyde metabolic process"/>
    <property type="evidence" value="ECO:0000250"/>
    <property type="project" value="SGD"/>
</dbReference>
<dbReference type="CDD" id="cd19147">
    <property type="entry name" value="AKR_AKR9A3_9B1-4"/>
    <property type="match status" value="1"/>
</dbReference>
<dbReference type="FunFam" id="3.20.20.100:FF:000024">
    <property type="entry name" value="Aryl-alcohol dehydrogenase"/>
    <property type="match status" value="1"/>
</dbReference>
<dbReference type="Gene3D" id="3.20.20.100">
    <property type="entry name" value="NADP-dependent oxidoreductase domain"/>
    <property type="match status" value="1"/>
</dbReference>
<dbReference type="InterPro" id="IPR050523">
    <property type="entry name" value="AKR_Detox_Biosynth"/>
</dbReference>
<dbReference type="InterPro" id="IPR023210">
    <property type="entry name" value="NADP_OxRdtase_dom"/>
</dbReference>
<dbReference type="InterPro" id="IPR036812">
    <property type="entry name" value="NADP_OxRdtase_dom_sf"/>
</dbReference>
<dbReference type="PANTHER" id="PTHR43364:SF2">
    <property type="entry name" value="ARYL-ALCOHOL DEHYDROGENASE AAD10-RELATED"/>
    <property type="match status" value="1"/>
</dbReference>
<dbReference type="PANTHER" id="PTHR43364">
    <property type="entry name" value="NADH-SPECIFIC METHYLGLYOXAL REDUCTASE-RELATED"/>
    <property type="match status" value="1"/>
</dbReference>
<dbReference type="Pfam" id="PF00248">
    <property type="entry name" value="Aldo_ket_red"/>
    <property type="match status" value="1"/>
</dbReference>
<dbReference type="SUPFAM" id="SSF51430">
    <property type="entry name" value="NAD(P)-linked oxidoreductase"/>
    <property type="match status" value="1"/>
</dbReference>
<comment type="induction">
    <text evidence="2">By oxidative stress.</text>
</comment>
<comment type="similarity">
    <text evidence="3">Belongs to the aldo/keto reductase family. Aldo/keto reductase 2 subfamily.</text>
</comment>
<organism>
    <name type="scientific">Saccharomyces cerevisiae (strain ATCC 204508 / S288c)</name>
    <name type="common">Baker's yeast</name>
    <dbReference type="NCBI Taxonomy" id="559292"/>
    <lineage>
        <taxon>Eukaryota</taxon>
        <taxon>Fungi</taxon>
        <taxon>Dikarya</taxon>
        <taxon>Ascomycota</taxon>
        <taxon>Saccharomycotina</taxon>
        <taxon>Saccharomycetes</taxon>
        <taxon>Saccharomycetales</taxon>
        <taxon>Saccharomycetaceae</taxon>
        <taxon>Saccharomyces</taxon>
    </lineage>
</organism>
<feature type="chain" id="PRO_0000070366" description="Probable aryl-alcohol dehydrogenase AAD4">
    <location>
        <begin position="1"/>
        <end position="329"/>
    </location>
</feature>
<feature type="active site" description="Proton donor" evidence="1">
    <location>
        <position position="30"/>
    </location>
</feature>
<feature type="binding site" evidence="1">
    <location>
        <position position="105"/>
    </location>
    <ligand>
        <name>substrate</name>
    </ligand>
</feature>
<feature type="binding site" evidence="1">
    <location>
        <begin position="190"/>
        <end position="200"/>
    </location>
    <ligand>
        <name>NADP(+)</name>
        <dbReference type="ChEBI" id="CHEBI:58349"/>
    </ligand>
</feature>
<feature type="site" description="Lowers pKa of active site Tyr" evidence="1">
    <location>
        <position position="57"/>
    </location>
</feature>
<evidence type="ECO:0000250" key="1"/>
<evidence type="ECO:0000269" key="2">
    <source>
    </source>
</evidence>
<evidence type="ECO:0000305" key="3"/>
<reference key="1">
    <citation type="journal article" date="1997" name="Nature">
        <title>The nucleotide sequence of Saccharomyces cerevisiae chromosome IV.</title>
        <authorList>
            <person name="Jacq C."/>
            <person name="Alt-Moerbe J."/>
            <person name="Andre B."/>
            <person name="Arnold W."/>
            <person name="Bahr A."/>
            <person name="Ballesta J.P.G."/>
            <person name="Bargues M."/>
            <person name="Baron L."/>
            <person name="Becker A."/>
            <person name="Biteau N."/>
            <person name="Bloecker H."/>
            <person name="Blugeon C."/>
            <person name="Boskovic J."/>
            <person name="Brandt P."/>
            <person name="Brueckner M."/>
            <person name="Buitrago M.J."/>
            <person name="Coster F."/>
            <person name="Delaveau T."/>
            <person name="del Rey F."/>
            <person name="Dujon B."/>
            <person name="Eide L.G."/>
            <person name="Garcia-Cantalejo J.M."/>
            <person name="Goffeau A."/>
            <person name="Gomez-Peris A."/>
            <person name="Granotier C."/>
            <person name="Hanemann V."/>
            <person name="Hankeln T."/>
            <person name="Hoheisel J.D."/>
            <person name="Jaeger W."/>
            <person name="Jimenez A."/>
            <person name="Jonniaux J.-L."/>
            <person name="Kraemer C."/>
            <person name="Kuester H."/>
            <person name="Laamanen P."/>
            <person name="Legros Y."/>
            <person name="Louis E.J."/>
            <person name="Moeller-Rieker S."/>
            <person name="Monnet A."/>
            <person name="Moro M."/>
            <person name="Mueller-Auer S."/>
            <person name="Nussbaumer B."/>
            <person name="Paricio N."/>
            <person name="Paulin L."/>
            <person name="Perea J."/>
            <person name="Perez-Alonso M."/>
            <person name="Perez-Ortin J.E."/>
            <person name="Pohl T.M."/>
            <person name="Prydz H."/>
            <person name="Purnelle B."/>
            <person name="Rasmussen S.W."/>
            <person name="Remacha M.A."/>
            <person name="Revuelta J.L."/>
            <person name="Rieger M."/>
            <person name="Salom D."/>
            <person name="Saluz H.P."/>
            <person name="Saiz J.E."/>
            <person name="Saren A.-M."/>
            <person name="Schaefer M."/>
            <person name="Scharfe M."/>
            <person name="Schmidt E.R."/>
            <person name="Schneider C."/>
            <person name="Scholler P."/>
            <person name="Schwarz S."/>
            <person name="Soler-Mira A."/>
            <person name="Urrestarazu L.A."/>
            <person name="Verhasselt P."/>
            <person name="Vissers S."/>
            <person name="Voet M."/>
            <person name="Volckaert G."/>
            <person name="Wagner G."/>
            <person name="Wambutt R."/>
            <person name="Wedler E."/>
            <person name="Wedler H."/>
            <person name="Woelfl S."/>
            <person name="Harris D.E."/>
            <person name="Bowman S."/>
            <person name="Brown D."/>
            <person name="Churcher C.M."/>
            <person name="Connor R."/>
            <person name="Dedman K."/>
            <person name="Gentles S."/>
            <person name="Hamlin N."/>
            <person name="Hunt S."/>
            <person name="Jones L."/>
            <person name="McDonald S."/>
            <person name="Murphy L.D."/>
            <person name="Niblett D."/>
            <person name="Odell C."/>
            <person name="Oliver K."/>
            <person name="Rajandream M.A."/>
            <person name="Richards C."/>
            <person name="Shore L."/>
            <person name="Walsh S.V."/>
            <person name="Barrell B.G."/>
            <person name="Dietrich F.S."/>
            <person name="Mulligan J.T."/>
            <person name="Allen E."/>
            <person name="Araujo R."/>
            <person name="Aviles E."/>
            <person name="Berno A."/>
            <person name="Carpenter J."/>
            <person name="Chen E."/>
            <person name="Cherry J.M."/>
            <person name="Chung E."/>
            <person name="Duncan M."/>
            <person name="Hunicke-Smith S."/>
            <person name="Hyman R.W."/>
            <person name="Komp C."/>
            <person name="Lashkari D."/>
            <person name="Lew H."/>
            <person name="Lin D."/>
            <person name="Mosedale D."/>
            <person name="Nakahara K."/>
            <person name="Namath A."/>
            <person name="Oefner P."/>
            <person name="Oh C."/>
            <person name="Petel F.X."/>
            <person name="Roberts D."/>
            <person name="Schramm S."/>
            <person name="Schroeder M."/>
            <person name="Shogren T."/>
            <person name="Shroff N."/>
            <person name="Winant A."/>
            <person name="Yelton M.A."/>
            <person name="Botstein D."/>
            <person name="Davis R.W."/>
            <person name="Johnston M."/>
            <person name="Andrews S."/>
            <person name="Brinkman R."/>
            <person name="Cooper J."/>
            <person name="Ding H."/>
            <person name="Du Z."/>
            <person name="Favello A."/>
            <person name="Fulton L."/>
            <person name="Gattung S."/>
            <person name="Greco T."/>
            <person name="Hallsworth K."/>
            <person name="Hawkins J."/>
            <person name="Hillier L.W."/>
            <person name="Jier M."/>
            <person name="Johnson D."/>
            <person name="Johnston L."/>
            <person name="Kirsten J."/>
            <person name="Kucaba T."/>
            <person name="Langston Y."/>
            <person name="Latreille P."/>
            <person name="Le T."/>
            <person name="Mardis E."/>
            <person name="Menezes S."/>
            <person name="Miller N."/>
            <person name="Nhan M."/>
            <person name="Pauley A."/>
            <person name="Peluso D."/>
            <person name="Rifkin L."/>
            <person name="Riles L."/>
            <person name="Taich A."/>
            <person name="Trevaskis E."/>
            <person name="Vignati D."/>
            <person name="Wilcox L."/>
            <person name="Wohldman P."/>
            <person name="Vaudin M."/>
            <person name="Wilson R."/>
            <person name="Waterston R."/>
            <person name="Albermann K."/>
            <person name="Hani J."/>
            <person name="Heumann K."/>
            <person name="Kleine K."/>
            <person name="Mewes H.-W."/>
            <person name="Zollner A."/>
            <person name="Zaccaria P."/>
        </authorList>
    </citation>
    <scope>NUCLEOTIDE SEQUENCE [LARGE SCALE GENOMIC DNA]</scope>
    <source>
        <strain>ATCC 204508 / S288c</strain>
    </source>
</reference>
<reference key="2">
    <citation type="journal article" date="2014" name="G3 (Bethesda)">
        <title>The reference genome sequence of Saccharomyces cerevisiae: Then and now.</title>
        <authorList>
            <person name="Engel S.R."/>
            <person name="Dietrich F.S."/>
            <person name="Fisk D.G."/>
            <person name="Binkley G."/>
            <person name="Balakrishnan R."/>
            <person name="Costanzo M.C."/>
            <person name="Dwight S.S."/>
            <person name="Hitz B.C."/>
            <person name="Karra K."/>
            <person name="Nash R.S."/>
            <person name="Weng S."/>
            <person name="Wong E.D."/>
            <person name="Lloyd P."/>
            <person name="Skrzypek M.S."/>
            <person name="Miyasato S.R."/>
            <person name="Simison M."/>
            <person name="Cherry J.M."/>
        </authorList>
    </citation>
    <scope>GENOME REANNOTATION</scope>
    <source>
        <strain>ATCC 204508 / S288c</strain>
    </source>
</reference>
<reference key="3">
    <citation type="journal article" date="1999" name="Genetics">
        <title>Analysis of the seven-member AAD gene set demonstrates that genetic redundancy in yeast may be more apparent than real.</title>
        <authorList>
            <person name="Delneri D."/>
            <person name="Gardner D.C.J."/>
            <person name="Oliver S.G."/>
        </authorList>
    </citation>
    <scope>INDUCTION</scope>
</reference>
<accession>Q07747</accession>
<accession>D6VRB4</accession>
<sequence>MGSMNKEQAFELLDAFYEAGGNCIDTANSYQNEESEIWIGEWMKSRKLRDQIVIATKFTGDYKKYEVGGGKSANYCGNHKHSLHVSVRDSLRKLQTDWIDILYVHWWDYMSSIEEVMDSLHILVQQGKVLYLGVSDTPAWVVSAANYYATSHGKTPFSIYQGKWNVLNRDFERDIIPMARHFGMALAPWDVMGGGRFQSKKAMEERKKNGEGLRTVSGTSKQTDKEVKISEALAKVAEEHGTESVTAIAIAYVRSKAKNVFPLVGGRKIEHLKQNIEALSIKLTPEQIEYLESIIPFDVGFPTNFIGDDPAVTKKASLLTAMSAQISFD</sequence>
<protein>
    <recommendedName>
        <fullName>Probable aryl-alcohol dehydrogenase AAD4</fullName>
        <ecNumber>1.1.1.-</ecNumber>
    </recommendedName>
</protein>
<proteinExistence type="evidence at transcript level"/>
<name>AAD4_YEAST</name>